<name>RSXB_ECODH</name>
<reference key="1">
    <citation type="journal article" date="2008" name="J. Bacteriol.">
        <title>The complete genome sequence of Escherichia coli DH10B: insights into the biology of a laboratory workhorse.</title>
        <authorList>
            <person name="Durfee T."/>
            <person name="Nelson R."/>
            <person name="Baldwin S."/>
            <person name="Plunkett G. III"/>
            <person name="Burland V."/>
            <person name="Mau B."/>
            <person name="Petrosino J.F."/>
            <person name="Qin X."/>
            <person name="Muzny D.M."/>
            <person name="Ayele M."/>
            <person name="Gibbs R.A."/>
            <person name="Csorgo B."/>
            <person name="Posfai G."/>
            <person name="Weinstock G.M."/>
            <person name="Blattner F.R."/>
        </authorList>
    </citation>
    <scope>NUCLEOTIDE SEQUENCE [LARGE SCALE GENOMIC DNA]</scope>
    <source>
        <strain>K12 / DH10B</strain>
    </source>
</reference>
<organism>
    <name type="scientific">Escherichia coli (strain K12 / DH10B)</name>
    <dbReference type="NCBI Taxonomy" id="316385"/>
    <lineage>
        <taxon>Bacteria</taxon>
        <taxon>Pseudomonadati</taxon>
        <taxon>Pseudomonadota</taxon>
        <taxon>Gammaproteobacteria</taxon>
        <taxon>Enterobacterales</taxon>
        <taxon>Enterobacteriaceae</taxon>
        <taxon>Escherichia</taxon>
    </lineage>
</organism>
<protein>
    <recommendedName>
        <fullName evidence="1">Ion-translocating oxidoreductase complex subunit B</fullName>
        <ecNumber evidence="1">7.-.-.-</ecNumber>
    </recommendedName>
    <alternativeName>
        <fullName evidence="1">Rsx electron transport complex subunit B</fullName>
    </alternativeName>
</protein>
<gene>
    <name evidence="1" type="primary">rsxB</name>
    <name type="ordered locus">ECDH10B_1762</name>
</gene>
<dbReference type="EC" id="7.-.-.-" evidence="1"/>
<dbReference type="EMBL" id="CP000948">
    <property type="protein sequence ID" value="ACB02834.1"/>
    <property type="molecule type" value="Genomic_DNA"/>
</dbReference>
<dbReference type="RefSeq" id="WP_000991805.1">
    <property type="nucleotide sequence ID" value="NC_010473.1"/>
</dbReference>
<dbReference type="KEGG" id="ecd:ECDH10B_1762"/>
<dbReference type="HOGENOM" id="CLU_063448_2_0_6"/>
<dbReference type="GO" id="GO:0005886">
    <property type="term" value="C:plasma membrane"/>
    <property type="evidence" value="ECO:0007669"/>
    <property type="project" value="UniProtKB-SubCell"/>
</dbReference>
<dbReference type="GO" id="GO:0051539">
    <property type="term" value="F:4 iron, 4 sulfur cluster binding"/>
    <property type="evidence" value="ECO:0007669"/>
    <property type="project" value="UniProtKB-UniRule"/>
</dbReference>
<dbReference type="GO" id="GO:0009055">
    <property type="term" value="F:electron transfer activity"/>
    <property type="evidence" value="ECO:0007669"/>
    <property type="project" value="InterPro"/>
</dbReference>
<dbReference type="GO" id="GO:0046872">
    <property type="term" value="F:metal ion binding"/>
    <property type="evidence" value="ECO:0007669"/>
    <property type="project" value="UniProtKB-KW"/>
</dbReference>
<dbReference type="GO" id="GO:0022900">
    <property type="term" value="P:electron transport chain"/>
    <property type="evidence" value="ECO:0007669"/>
    <property type="project" value="UniProtKB-UniRule"/>
</dbReference>
<dbReference type="FunFam" id="1.10.15.40:FF:000001">
    <property type="entry name" value="Ion-translocating oxidoreductase complex subunit B"/>
    <property type="match status" value="1"/>
</dbReference>
<dbReference type="Gene3D" id="3.30.70.20">
    <property type="match status" value="1"/>
</dbReference>
<dbReference type="Gene3D" id="1.10.15.40">
    <property type="entry name" value="Electron transport complex subunit B, putative Fe-S cluster"/>
    <property type="match status" value="1"/>
</dbReference>
<dbReference type="HAMAP" id="MF_00463">
    <property type="entry name" value="RsxB_RnfB"/>
    <property type="match status" value="1"/>
</dbReference>
<dbReference type="InterPro" id="IPR007202">
    <property type="entry name" value="4Fe-4S_dom"/>
</dbReference>
<dbReference type="InterPro" id="IPR017896">
    <property type="entry name" value="4Fe4S_Fe-S-bd"/>
</dbReference>
<dbReference type="InterPro" id="IPR017900">
    <property type="entry name" value="4Fe4S_Fe_S_CS"/>
</dbReference>
<dbReference type="InterPro" id="IPR050395">
    <property type="entry name" value="4Fe4S_Ferredoxin_RnfB"/>
</dbReference>
<dbReference type="InterPro" id="IPR010207">
    <property type="entry name" value="Elect_transpt_cplx_RnfB/RsxB"/>
</dbReference>
<dbReference type="InterPro" id="IPR016463">
    <property type="entry name" value="RnfB/RsxB_Proteobac"/>
</dbReference>
<dbReference type="NCBIfam" id="NF003475">
    <property type="entry name" value="PRK05113.1"/>
    <property type="match status" value="1"/>
</dbReference>
<dbReference type="NCBIfam" id="TIGR01944">
    <property type="entry name" value="rnfB"/>
    <property type="match status" value="1"/>
</dbReference>
<dbReference type="PANTHER" id="PTHR43560">
    <property type="entry name" value="ION-TRANSLOCATING OXIDOREDUCTASE COMPLEX SUBUNIT B"/>
    <property type="match status" value="1"/>
</dbReference>
<dbReference type="PANTHER" id="PTHR43560:SF1">
    <property type="entry name" value="ION-TRANSLOCATING OXIDOREDUCTASE COMPLEX SUBUNIT B"/>
    <property type="match status" value="1"/>
</dbReference>
<dbReference type="Pfam" id="PF14697">
    <property type="entry name" value="Fer4_21"/>
    <property type="match status" value="1"/>
</dbReference>
<dbReference type="Pfam" id="PF04060">
    <property type="entry name" value="FeS"/>
    <property type="match status" value="1"/>
</dbReference>
<dbReference type="PIRSF" id="PIRSF005784">
    <property type="entry name" value="Elect_transpt_RnfB"/>
    <property type="match status" value="1"/>
</dbReference>
<dbReference type="SUPFAM" id="SSF54862">
    <property type="entry name" value="4Fe-4S ferredoxins"/>
    <property type="match status" value="1"/>
</dbReference>
<dbReference type="PROSITE" id="PS51656">
    <property type="entry name" value="4FE4S"/>
    <property type="match status" value="1"/>
</dbReference>
<dbReference type="PROSITE" id="PS00198">
    <property type="entry name" value="4FE4S_FER_1"/>
    <property type="match status" value="2"/>
</dbReference>
<dbReference type="PROSITE" id="PS51379">
    <property type="entry name" value="4FE4S_FER_2"/>
    <property type="match status" value="2"/>
</dbReference>
<feature type="chain" id="PRO_1000194475" description="Ion-translocating oxidoreductase complex subunit B">
    <location>
        <begin position="1"/>
        <end position="192"/>
    </location>
</feature>
<feature type="domain" description="4Fe-4S" evidence="1">
    <location>
        <begin position="32"/>
        <end position="91"/>
    </location>
</feature>
<feature type="domain" description="4Fe-4S ferredoxin-type 1" evidence="1">
    <location>
        <begin position="108"/>
        <end position="137"/>
    </location>
</feature>
<feature type="domain" description="4Fe-4S ferredoxin-type 2" evidence="1">
    <location>
        <begin position="138"/>
        <end position="167"/>
    </location>
</feature>
<feature type="region of interest" description="Hydrophobic" evidence="1">
    <location>
        <begin position="1"/>
        <end position="26"/>
    </location>
</feature>
<feature type="binding site" evidence="1">
    <location>
        <position position="49"/>
    </location>
    <ligand>
        <name>[4Fe-4S] cluster</name>
        <dbReference type="ChEBI" id="CHEBI:49883"/>
        <label>1</label>
    </ligand>
</feature>
<feature type="binding site" evidence="1">
    <location>
        <position position="52"/>
    </location>
    <ligand>
        <name>[4Fe-4S] cluster</name>
        <dbReference type="ChEBI" id="CHEBI:49883"/>
        <label>1</label>
    </ligand>
</feature>
<feature type="binding site" evidence="1">
    <location>
        <position position="57"/>
    </location>
    <ligand>
        <name>[4Fe-4S] cluster</name>
        <dbReference type="ChEBI" id="CHEBI:49883"/>
        <label>1</label>
    </ligand>
</feature>
<feature type="binding site" evidence="1">
    <location>
        <position position="74"/>
    </location>
    <ligand>
        <name>[4Fe-4S] cluster</name>
        <dbReference type="ChEBI" id="CHEBI:49883"/>
        <label>1</label>
    </ligand>
</feature>
<feature type="binding site" evidence="1">
    <location>
        <position position="117"/>
    </location>
    <ligand>
        <name>[4Fe-4S] cluster</name>
        <dbReference type="ChEBI" id="CHEBI:49883"/>
        <label>2</label>
    </ligand>
</feature>
<feature type="binding site" evidence="1">
    <location>
        <position position="120"/>
    </location>
    <ligand>
        <name>[4Fe-4S] cluster</name>
        <dbReference type="ChEBI" id="CHEBI:49883"/>
        <label>2</label>
    </ligand>
</feature>
<feature type="binding site" evidence="1">
    <location>
        <position position="123"/>
    </location>
    <ligand>
        <name>[4Fe-4S] cluster</name>
        <dbReference type="ChEBI" id="CHEBI:49883"/>
        <label>2</label>
    </ligand>
</feature>
<feature type="binding site" evidence="1">
    <location>
        <position position="127"/>
    </location>
    <ligand>
        <name>[4Fe-4S] cluster</name>
        <dbReference type="ChEBI" id="CHEBI:49883"/>
        <label>3</label>
    </ligand>
</feature>
<feature type="binding site" evidence="1">
    <location>
        <position position="147"/>
    </location>
    <ligand>
        <name>[4Fe-4S] cluster</name>
        <dbReference type="ChEBI" id="CHEBI:49883"/>
        <label>3</label>
    </ligand>
</feature>
<feature type="binding site" evidence="1">
    <location>
        <position position="150"/>
    </location>
    <ligand>
        <name>[4Fe-4S] cluster</name>
        <dbReference type="ChEBI" id="CHEBI:49883"/>
        <label>3</label>
    </ligand>
</feature>
<feature type="binding site" evidence="1">
    <location>
        <position position="153"/>
    </location>
    <ligand>
        <name>[4Fe-4S] cluster</name>
        <dbReference type="ChEBI" id="CHEBI:49883"/>
        <label>3</label>
    </ligand>
</feature>
<feature type="binding site" evidence="1">
    <location>
        <position position="157"/>
    </location>
    <ligand>
        <name>[4Fe-4S] cluster</name>
        <dbReference type="ChEBI" id="CHEBI:49883"/>
        <label>2</label>
    </ligand>
</feature>
<keyword id="KW-0004">4Fe-4S</keyword>
<keyword id="KW-0997">Cell inner membrane</keyword>
<keyword id="KW-1003">Cell membrane</keyword>
<keyword id="KW-0249">Electron transport</keyword>
<keyword id="KW-0408">Iron</keyword>
<keyword id="KW-0411">Iron-sulfur</keyword>
<keyword id="KW-0472">Membrane</keyword>
<keyword id="KW-0479">Metal-binding</keyword>
<keyword id="KW-0677">Repeat</keyword>
<keyword id="KW-1278">Translocase</keyword>
<keyword id="KW-0813">Transport</keyword>
<evidence type="ECO:0000255" key="1">
    <source>
        <dbReference type="HAMAP-Rule" id="MF_00463"/>
    </source>
</evidence>
<accession>B1XF93</accession>
<proteinExistence type="inferred from homology"/>
<comment type="function">
    <text evidence="1">Part of a membrane-bound complex that couples electron transfer with translocation of ions across the membrane. Required to maintain the reduced state of SoxR.</text>
</comment>
<comment type="cofactor">
    <cofactor evidence="1">
        <name>[4Fe-4S] cluster</name>
        <dbReference type="ChEBI" id="CHEBI:49883"/>
    </cofactor>
    <text evidence="1">Binds 3 [4Fe-4S] clusters.</text>
</comment>
<comment type="subunit">
    <text evidence="1">The complex is composed of six subunits: RsxA, RsxB, RsxC, RsxD, RsxE and RsxG.</text>
</comment>
<comment type="subcellular location">
    <subcellularLocation>
        <location evidence="1">Cell inner membrane</location>
    </subcellularLocation>
</comment>
<comment type="similarity">
    <text evidence="1">Belongs to the 4Fe4S bacterial-type ferredoxin family. RnfB subfamily.</text>
</comment>
<sequence length="192" mass="20544">MNAIWIAVAAVSLLGLAFGAILGYASRRFAVEDDPVVEKIDEILPQSQCGQCGYPGCRPYAEAISCNGEKINRCAPGGEAVMLKIAELLNVEPQPLDGEAQEITPARMVAVIDENNCIGCTKCIQACPVDAIVGATRAMHTVMSDLCTGCNLCVDPCPTHCISLQPVAETPDSWKWDLNTIPVRIIPVEHHA</sequence>